<dbReference type="EC" id="3.5.3.23" evidence="1"/>
<dbReference type="EMBL" id="CP000308">
    <property type="protein sequence ID" value="ABG13314.1"/>
    <property type="molecule type" value="Genomic_DNA"/>
</dbReference>
<dbReference type="RefSeq" id="WP_002212029.1">
    <property type="nucleotide sequence ID" value="NZ_CP009906.1"/>
</dbReference>
<dbReference type="SMR" id="Q1C8A8"/>
<dbReference type="GeneID" id="49786049"/>
<dbReference type="KEGG" id="ypa:YPA_1347"/>
<dbReference type="UniPathway" id="UPA00185">
    <property type="reaction ID" value="UER00280"/>
</dbReference>
<dbReference type="Proteomes" id="UP000001971">
    <property type="component" value="Chromosome"/>
</dbReference>
<dbReference type="GO" id="GO:0009015">
    <property type="term" value="F:N-succinylarginine dihydrolase activity"/>
    <property type="evidence" value="ECO:0007669"/>
    <property type="project" value="UniProtKB-UniRule"/>
</dbReference>
<dbReference type="GO" id="GO:0019544">
    <property type="term" value="P:arginine catabolic process to glutamate"/>
    <property type="evidence" value="ECO:0007669"/>
    <property type="project" value="UniProtKB-UniRule"/>
</dbReference>
<dbReference type="GO" id="GO:0019545">
    <property type="term" value="P:arginine catabolic process to succinate"/>
    <property type="evidence" value="ECO:0007669"/>
    <property type="project" value="UniProtKB-UniRule"/>
</dbReference>
<dbReference type="Gene3D" id="3.75.10.20">
    <property type="entry name" value="Succinylarginine dihydrolase"/>
    <property type="match status" value="1"/>
</dbReference>
<dbReference type="HAMAP" id="MF_01172">
    <property type="entry name" value="AstB"/>
    <property type="match status" value="1"/>
</dbReference>
<dbReference type="InterPro" id="IPR037031">
    <property type="entry name" value="AstB_sf"/>
</dbReference>
<dbReference type="InterPro" id="IPR007079">
    <property type="entry name" value="SuccinylArg_d-Hdrlase_AstB"/>
</dbReference>
<dbReference type="NCBIfam" id="TIGR03241">
    <property type="entry name" value="arg_catab_astB"/>
    <property type="match status" value="1"/>
</dbReference>
<dbReference type="NCBIfam" id="NF009789">
    <property type="entry name" value="PRK13281.1"/>
    <property type="match status" value="1"/>
</dbReference>
<dbReference type="PANTHER" id="PTHR30420">
    <property type="entry name" value="N-SUCCINYLARGININE DIHYDROLASE"/>
    <property type="match status" value="1"/>
</dbReference>
<dbReference type="PANTHER" id="PTHR30420:SF2">
    <property type="entry name" value="N-SUCCINYLARGININE DIHYDROLASE"/>
    <property type="match status" value="1"/>
</dbReference>
<dbReference type="Pfam" id="PF04996">
    <property type="entry name" value="AstB"/>
    <property type="match status" value="1"/>
</dbReference>
<dbReference type="SUPFAM" id="SSF55909">
    <property type="entry name" value="Pentein"/>
    <property type="match status" value="1"/>
</dbReference>
<comment type="function">
    <text evidence="1">Catalyzes the hydrolysis of N(2)-succinylarginine into N(2)-succinylornithine, ammonia and CO(2).</text>
</comment>
<comment type="catalytic activity">
    <reaction evidence="1">
        <text>N(2)-succinyl-L-arginine + 2 H2O + 2 H(+) = N(2)-succinyl-L-ornithine + 2 NH4(+) + CO2</text>
        <dbReference type="Rhea" id="RHEA:19533"/>
        <dbReference type="ChEBI" id="CHEBI:15377"/>
        <dbReference type="ChEBI" id="CHEBI:15378"/>
        <dbReference type="ChEBI" id="CHEBI:16526"/>
        <dbReference type="ChEBI" id="CHEBI:28938"/>
        <dbReference type="ChEBI" id="CHEBI:58241"/>
        <dbReference type="ChEBI" id="CHEBI:58514"/>
        <dbReference type="EC" id="3.5.3.23"/>
    </reaction>
</comment>
<comment type="pathway">
    <text evidence="1">Amino-acid degradation; L-arginine degradation via AST pathway; L-glutamate and succinate from L-arginine: step 2/5.</text>
</comment>
<comment type="subunit">
    <text evidence="1">Homodimer.</text>
</comment>
<comment type="similarity">
    <text evidence="1">Belongs to the succinylarginine dihydrolase family.</text>
</comment>
<sequence length="447" mass="49234">MAGYEVNFDGLVGLTHHYAGLSFGNEASTTHQNRTSNPRLAAKQGLLKMKALADLGYKQGVLPPQERPAIGVLRKLGFSGSDEQVLSDVARNAPRLLSAVSSASSMWTANAATVSPSADSADGRVHFTVANLHNKFHRAIEAETTAVLLPAVFNNHRHFVHHDALPSVTLLGDEGAANHNRLGGEYDSPAIQMFVYGRQGMESGAVPGRYPARQTREASQAVARLHQLDPKRTVFVQQNPAVIDQGVFHNDVIAVSNRNVLFHHELAFLSSTQVMDDIRCKMAGLEQQLVNIEVPEAEVSVADAVSTYLFNSQLLHKANGKMLLVIPQESQDNPSVWRYLSELVSGDGPIDELRVFDLRESMRNGGGPACLRLRVVLNDAELQAVNSRVMLTPALFVTLNNWVDQHYRDHLQFKDLADPHLLQEGRQALDELTRILNLGPVYPFQRN</sequence>
<organism>
    <name type="scientific">Yersinia pestis bv. Antiqua (strain Antiqua)</name>
    <dbReference type="NCBI Taxonomy" id="360102"/>
    <lineage>
        <taxon>Bacteria</taxon>
        <taxon>Pseudomonadati</taxon>
        <taxon>Pseudomonadota</taxon>
        <taxon>Gammaproteobacteria</taxon>
        <taxon>Enterobacterales</taxon>
        <taxon>Yersiniaceae</taxon>
        <taxon>Yersinia</taxon>
    </lineage>
</organism>
<keyword id="KW-0056">Arginine metabolism</keyword>
<keyword id="KW-0378">Hydrolase</keyword>
<evidence type="ECO:0000255" key="1">
    <source>
        <dbReference type="HAMAP-Rule" id="MF_01172"/>
    </source>
</evidence>
<feature type="chain" id="PRO_0000262383" description="N-succinylarginine dihydrolase">
    <location>
        <begin position="1"/>
        <end position="447"/>
    </location>
</feature>
<feature type="active site" evidence="1">
    <location>
        <position position="174"/>
    </location>
</feature>
<feature type="active site" evidence="1">
    <location>
        <position position="249"/>
    </location>
</feature>
<feature type="active site" description="Nucleophile" evidence="1">
    <location>
        <position position="370"/>
    </location>
</feature>
<feature type="binding site" evidence="1">
    <location>
        <begin position="19"/>
        <end position="28"/>
    </location>
    <ligand>
        <name>substrate</name>
    </ligand>
</feature>
<feature type="binding site" evidence="1">
    <location>
        <position position="110"/>
    </location>
    <ligand>
        <name>substrate</name>
    </ligand>
</feature>
<feature type="binding site" evidence="1">
    <location>
        <begin position="137"/>
        <end position="138"/>
    </location>
    <ligand>
        <name>substrate</name>
    </ligand>
</feature>
<feature type="binding site" evidence="1">
    <location>
        <position position="213"/>
    </location>
    <ligand>
        <name>substrate</name>
    </ligand>
</feature>
<feature type="binding site" evidence="1">
    <location>
        <position position="251"/>
    </location>
    <ligand>
        <name>substrate</name>
    </ligand>
</feature>
<feature type="binding site" evidence="1">
    <location>
        <position position="364"/>
    </location>
    <ligand>
        <name>substrate</name>
    </ligand>
</feature>
<proteinExistence type="inferred from homology"/>
<accession>Q1C8A8</accession>
<name>ASTB_YERPA</name>
<gene>
    <name evidence="1" type="primary">astB</name>
    <name type="ordered locus">YPA_1347</name>
</gene>
<protein>
    <recommendedName>
        <fullName evidence="1">N-succinylarginine dihydrolase</fullName>
        <ecNumber evidence="1">3.5.3.23</ecNumber>
    </recommendedName>
</protein>
<reference key="1">
    <citation type="journal article" date="2006" name="J. Bacteriol.">
        <title>Complete genome sequence of Yersinia pestis strains Antiqua and Nepal516: evidence of gene reduction in an emerging pathogen.</title>
        <authorList>
            <person name="Chain P.S.G."/>
            <person name="Hu P."/>
            <person name="Malfatti S.A."/>
            <person name="Radnedge L."/>
            <person name="Larimer F."/>
            <person name="Vergez L.M."/>
            <person name="Worsham P."/>
            <person name="Chu M.C."/>
            <person name="Andersen G.L."/>
        </authorList>
    </citation>
    <scope>NUCLEOTIDE SEQUENCE [LARGE SCALE GENOMIC DNA]</scope>
    <source>
        <strain>Antiqua</strain>
    </source>
</reference>